<feature type="chain" id="PRO_0000122347" description="Baculoviral IAP repeat-containing protein 2">
    <location>
        <begin position="1"/>
        <end position="618"/>
    </location>
</feature>
<feature type="repeat" description="BIR 1">
    <location>
        <begin position="46"/>
        <end position="113"/>
    </location>
</feature>
<feature type="repeat" description="BIR 2">
    <location>
        <begin position="184"/>
        <end position="250"/>
    </location>
</feature>
<feature type="repeat" description="BIR 3">
    <location>
        <begin position="269"/>
        <end position="336"/>
    </location>
</feature>
<feature type="domain" description="CARD" evidence="1">
    <location>
        <begin position="453"/>
        <end position="543"/>
    </location>
</feature>
<feature type="zinc finger region" description="RING-type" evidence="2">
    <location>
        <begin position="571"/>
        <end position="606"/>
    </location>
</feature>
<feature type="binding site">
    <location>
        <position position="306"/>
    </location>
    <ligand>
        <name>Zn(2+)</name>
        <dbReference type="ChEBI" id="CHEBI:29105"/>
    </ligand>
</feature>
<feature type="binding site">
    <location>
        <position position="309"/>
    </location>
    <ligand>
        <name>Zn(2+)</name>
        <dbReference type="ChEBI" id="CHEBI:29105"/>
    </ligand>
</feature>
<feature type="binding site">
    <location>
        <position position="326"/>
    </location>
    <ligand>
        <name>Zn(2+)</name>
        <dbReference type="ChEBI" id="CHEBI:29105"/>
    </ligand>
</feature>
<feature type="binding site">
    <location>
        <position position="333"/>
    </location>
    <ligand>
        <name>Zn(2+)</name>
        <dbReference type="ChEBI" id="CHEBI:29105"/>
    </ligand>
</feature>
<feature type="splice variant" id="VSP_045314" description="In isoform 2." evidence="16">
    <location>
        <begin position="1"/>
        <end position="49"/>
    </location>
</feature>
<feature type="sequence variant" id="VAR_049535" description="In dbSNP:rs34749508.">
    <original>M</original>
    <variation>I</variation>
    <location>
        <position position="453"/>
    </location>
</feature>
<feature type="sequence variant" id="VAR_025016" description="In dbSNP:rs370745983." evidence="15">
    <original>M</original>
    <variation>V</variation>
    <location>
        <position position="453"/>
    </location>
</feature>
<feature type="sequence variant" id="VAR_025017" description="In dbSNP:rs34510872." evidence="15">
    <original>A</original>
    <variation>V</variation>
    <location>
        <position position="506"/>
    </location>
</feature>
<feature type="sequence variant" id="VAR_025018" description="In dbSNP:rs35494784." evidence="15">
    <original>P</original>
    <variation>S</variation>
    <location>
        <position position="549"/>
    </location>
</feature>
<feature type="sequence conflict" description="In Ref. 2; AAC50372." evidence="18" ref="2">
    <original>S</original>
    <variation>P</variation>
    <location>
        <position position="157"/>
    </location>
</feature>
<feature type="sequence conflict" description="In Ref. 2; AAC50372." evidence="18" ref="2">
    <original>C</original>
    <variation>G</variation>
    <location>
        <position position="308"/>
    </location>
</feature>
<feature type="sequence conflict" description="In Ref. 2; AAC50372." evidence="18" ref="2">
    <original>Q</original>
    <variation>L</variation>
    <location>
        <position position="414"/>
    </location>
</feature>
<feature type="sequence conflict" description="In Ref. 2; AAC50372." evidence="18" ref="2">
    <original>L</original>
    <variation>W</variation>
    <location>
        <position position="514"/>
    </location>
</feature>
<feature type="helix" evidence="22">
    <location>
        <begin position="43"/>
        <end position="51"/>
    </location>
</feature>
<feature type="helix" evidence="22">
    <location>
        <begin position="52"/>
        <end position="55"/>
    </location>
</feature>
<feature type="helix" evidence="22">
    <location>
        <begin position="64"/>
        <end position="69"/>
    </location>
</feature>
<feature type="strand" evidence="22">
    <location>
        <begin position="72"/>
        <end position="74"/>
    </location>
</feature>
<feature type="strand" evidence="22">
    <location>
        <begin position="81"/>
        <end position="83"/>
    </location>
</feature>
<feature type="turn" evidence="22">
    <location>
        <begin position="84"/>
        <end position="86"/>
    </location>
</feature>
<feature type="helix" evidence="22">
    <location>
        <begin position="99"/>
        <end position="106"/>
    </location>
</feature>
<feature type="helix" evidence="22">
    <location>
        <begin position="111"/>
        <end position="117"/>
    </location>
</feature>
<feature type="helix" evidence="27">
    <location>
        <begin position="184"/>
        <end position="188"/>
    </location>
</feature>
<feature type="strand" evidence="27">
    <location>
        <begin position="197"/>
        <end position="199"/>
    </location>
</feature>
<feature type="helix" evidence="27">
    <location>
        <begin position="201"/>
        <end position="206"/>
    </location>
</feature>
<feature type="strand" evidence="27">
    <location>
        <begin position="209"/>
        <end position="211"/>
    </location>
</feature>
<feature type="strand" evidence="27">
    <location>
        <begin position="218"/>
        <end position="220"/>
    </location>
</feature>
<feature type="turn" evidence="27">
    <location>
        <begin position="221"/>
        <end position="223"/>
    </location>
</feature>
<feature type="helix" evidence="27">
    <location>
        <begin position="236"/>
        <end position="243"/>
    </location>
</feature>
<feature type="helix" evidence="27">
    <location>
        <begin position="248"/>
        <end position="251"/>
    </location>
</feature>
<feature type="helix" evidence="24">
    <location>
        <begin position="264"/>
        <end position="266"/>
    </location>
</feature>
<feature type="helix" evidence="24">
    <location>
        <begin position="269"/>
        <end position="274"/>
    </location>
</feature>
<feature type="turn" evidence="24">
    <location>
        <begin position="275"/>
        <end position="278"/>
    </location>
</feature>
<feature type="strand" evidence="19">
    <location>
        <begin position="279"/>
        <end position="282"/>
    </location>
</feature>
<feature type="strand" evidence="24">
    <location>
        <begin position="283"/>
        <end position="285"/>
    </location>
</feature>
<feature type="helix" evidence="24">
    <location>
        <begin position="287"/>
        <end position="292"/>
    </location>
</feature>
<feature type="strand" evidence="24">
    <location>
        <begin position="295"/>
        <end position="297"/>
    </location>
</feature>
<feature type="strand" evidence="24">
    <location>
        <begin position="304"/>
        <end position="306"/>
    </location>
</feature>
<feature type="turn" evidence="24">
    <location>
        <begin position="307"/>
        <end position="309"/>
    </location>
</feature>
<feature type="strand" evidence="21">
    <location>
        <begin position="312"/>
        <end position="314"/>
    </location>
</feature>
<feature type="helix" evidence="24">
    <location>
        <begin position="322"/>
        <end position="329"/>
    </location>
</feature>
<feature type="helix" evidence="24">
    <location>
        <begin position="334"/>
        <end position="340"/>
    </location>
</feature>
<feature type="helix" evidence="24">
    <location>
        <begin position="342"/>
        <end position="348"/>
    </location>
</feature>
<feature type="helix" evidence="25">
    <location>
        <begin position="355"/>
        <end position="361"/>
    </location>
</feature>
<feature type="helix" evidence="23">
    <location>
        <begin position="389"/>
        <end position="391"/>
    </location>
</feature>
<feature type="helix" evidence="23">
    <location>
        <begin position="394"/>
        <end position="401"/>
    </location>
</feature>
<feature type="helix" evidence="23">
    <location>
        <begin position="406"/>
        <end position="420"/>
    </location>
</feature>
<feature type="helix" evidence="23">
    <location>
        <begin position="427"/>
        <end position="450"/>
    </location>
</feature>
<feature type="turn" evidence="20">
    <location>
        <begin position="451"/>
        <end position="453"/>
    </location>
</feature>
<feature type="helix" evidence="23">
    <location>
        <begin position="456"/>
        <end position="463"/>
    </location>
</feature>
<feature type="helix" evidence="23">
    <location>
        <begin position="465"/>
        <end position="471"/>
    </location>
</feature>
<feature type="helix" evidence="23">
    <location>
        <begin position="476"/>
        <end position="484"/>
    </location>
</feature>
<feature type="strand" evidence="20">
    <location>
        <begin position="485"/>
        <end position="487"/>
    </location>
</feature>
<feature type="helix" evidence="23">
    <location>
        <begin position="490"/>
        <end position="497"/>
    </location>
</feature>
<feature type="helix" evidence="23">
    <location>
        <begin position="502"/>
        <end position="516"/>
    </location>
</feature>
<feature type="helix" evidence="23">
    <location>
        <begin position="518"/>
        <end position="531"/>
    </location>
</feature>
<feature type="helix" evidence="23">
    <location>
        <begin position="533"/>
        <end position="540"/>
    </location>
</feature>
<feature type="helix" evidence="23">
    <location>
        <begin position="553"/>
        <end position="555"/>
    </location>
</feature>
<feature type="helix" evidence="26">
    <location>
        <begin position="558"/>
        <end position="568"/>
    </location>
</feature>
<feature type="turn" evidence="26">
    <location>
        <begin position="572"/>
        <end position="574"/>
    </location>
</feature>
<feature type="strand" evidence="26">
    <location>
        <begin position="575"/>
        <end position="578"/>
    </location>
</feature>
<feature type="strand" evidence="26">
    <location>
        <begin position="581"/>
        <end position="584"/>
    </location>
</feature>
<feature type="strand" evidence="26">
    <location>
        <begin position="589"/>
        <end position="591"/>
    </location>
</feature>
<feature type="turn" evidence="26">
    <location>
        <begin position="593"/>
        <end position="595"/>
    </location>
</feature>
<feature type="helix" evidence="26">
    <location>
        <begin position="596"/>
        <end position="598"/>
    </location>
</feature>
<feature type="turn" evidence="26">
    <location>
        <begin position="603"/>
        <end position="605"/>
    </location>
</feature>
<feature type="strand" evidence="26">
    <location>
        <begin position="611"/>
        <end position="614"/>
    </location>
</feature>
<name>BIRC2_HUMAN</name>
<organism>
    <name type="scientific">Homo sapiens</name>
    <name type="common">Human</name>
    <dbReference type="NCBI Taxonomy" id="9606"/>
    <lineage>
        <taxon>Eukaryota</taxon>
        <taxon>Metazoa</taxon>
        <taxon>Chordata</taxon>
        <taxon>Craniata</taxon>
        <taxon>Vertebrata</taxon>
        <taxon>Euteleostomi</taxon>
        <taxon>Mammalia</taxon>
        <taxon>Eutheria</taxon>
        <taxon>Euarchontoglires</taxon>
        <taxon>Primates</taxon>
        <taxon>Haplorrhini</taxon>
        <taxon>Catarrhini</taxon>
        <taxon>Hominidae</taxon>
        <taxon>Homo</taxon>
    </lineage>
</organism>
<protein>
    <recommendedName>
        <fullName>Baculoviral IAP repeat-containing protein 2</fullName>
        <ecNumber evidence="4 7 11 12">2.3.2.27</ecNumber>
    </recommendedName>
    <alternativeName>
        <fullName>Cellular inhibitor of apoptosis 1</fullName>
        <shortName evidence="17">C-IAP1</shortName>
    </alternativeName>
    <alternativeName>
        <fullName>IAP homolog B</fullName>
    </alternativeName>
    <alternativeName>
        <fullName>Inhibitor of apoptosis protein 2</fullName>
        <shortName>hIAP-2</shortName>
        <shortName>hIAP2</shortName>
    </alternativeName>
    <alternativeName>
        <fullName>RING finger protein 48</fullName>
    </alternativeName>
    <alternativeName>
        <fullName evidence="18">RING-type E3 ubiquitin transferase BIRC2</fullName>
    </alternativeName>
    <alternativeName>
        <fullName>TNFR2-TRAF-signaling complex protein 2</fullName>
    </alternativeName>
</protein>
<proteinExistence type="evidence at protein level"/>
<keyword id="KW-0002">3D-structure</keyword>
<keyword id="KW-0010">Activator</keyword>
<keyword id="KW-0025">Alternative splicing</keyword>
<keyword id="KW-0053">Apoptosis</keyword>
<keyword id="KW-0963">Cytoplasm</keyword>
<keyword id="KW-0479">Metal-binding</keyword>
<keyword id="KW-0539">Nucleus</keyword>
<keyword id="KW-1267">Proteomics identification</keyword>
<keyword id="KW-1185">Reference proteome</keyword>
<keyword id="KW-0677">Repeat</keyword>
<keyword id="KW-0804">Transcription</keyword>
<keyword id="KW-0805">Transcription regulation</keyword>
<keyword id="KW-0808">Transferase</keyword>
<keyword id="KW-0832">Ubl conjugation</keyword>
<keyword id="KW-0833">Ubl conjugation pathway</keyword>
<keyword id="KW-0862">Zinc</keyword>
<keyword id="KW-0863">Zinc-finger</keyword>
<gene>
    <name type="primary">BIRC2</name>
    <name type="synonym">API1</name>
    <name type="synonym">MIHB</name>
    <name type="synonym">RNF48</name>
</gene>
<dbReference type="EC" id="2.3.2.27" evidence="4 7 11 12"/>
<dbReference type="EMBL" id="L49431">
    <property type="protein sequence ID" value="AAC41942.1"/>
    <property type="molecule type" value="mRNA"/>
</dbReference>
<dbReference type="EMBL" id="U45879">
    <property type="protein sequence ID" value="AAC50372.1"/>
    <property type="molecule type" value="mRNA"/>
</dbReference>
<dbReference type="EMBL" id="U37547">
    <property type="protein sequence ID" value="AAC50508.1"/>
    <property type="molecule type" value="mRNA"/>
</dbReference>
<dbReference type="EMBL" id="AK303197">
    <property type="protein sequence ID" value="BAG64288.1"/>
    <property type="molecule type" value="mRNA"/>
</dbReference>
<dbReference type="EMBL" id="AP000942">
    <property type="status" value="NOT_ANNOTATED_CDS"/>
    <property type="molecule type" value="Genomic_DNA"/>
</dbReference>
<dbReference type="EMBL" id="DQ068066">
    <property type="protein sequence ID" value="AAY46158.1"/>
    <property type="molecule type" value="Genomic_DNA"/>
</dbReference>
<dbReference type="EMBL" id="BC016174">
    <property type="protein sequence ID" value="AAH16174.1"/>
    <property type="molecule type" value="mRNA"/>
</dbReference>
<dbReference type="EMBL" id="BC028578">
    <property type="protein sequence ID" value="AAH28578.1"/>
    <property type="molecule type" value="mRNA"/>
</dbReference>
<dbReference type="CCDS" id="CCDS58169.1">
    <molecule id="Q13490-2"/>
</dbReference>
<dbReference type="CCDS" id="CCDS8316.1">
    <molecule id="Q13490-1"/>
</dbReference>
<dbReference type="PIR" id="S68450">
    <property type="entry name" value="S68450"/>
</dbReference>
<dbReference type="RefSeq" id="NP_001157.1">
    <molecule id="Q13490-1"/>
    <property type="nucleotide sequence ID" value="NM_001166.5"/>
</dbReference>
<dbReference type="RefSeq" id="NP_001243092.1">
    <molecule id="Q13490-1"/>
    <property type="nucleotide sequence ID" value="NM_001256163.1"/>
</dbReference>
<dbReference type="RefSeq" id="NP_001243095.1">
    <molecule id="Q13490-2"/>
    <property type="nucleotide sequence ID" value="NM_001256166.2"/>
</dbReference>
<dbReference type="PDB" id="1QBH">
    <property type="method" value="NMR"/>
    <property type="chains" value="A=266-363"/>
</dbReference>
<dbReference type="PDB" id="2L9M">
    <property type="method" value="NMR"/>
    <property type="chains" value="A=435-562"/>
</dbReference>
<dbReference type="PDB" id="3D9T">
    <property type="method" value="X-ray"/>
    <property type="resolution" value="1.50 A"/>
    <property type="chains" value="A/B=260-352"/>
</dbReference>
<dbReference type="PDB" id="3D9U">
    <property type="method" value="X-ray"/>
    <property type="resolution" value="2.30 A"/>
    <property type="chains" value="A=260-352"/>
</dbReference>
<dbReference type="PDB" id="3M1D">
    <property type="method" value="X-ray"/>
    <property type="resolution" value="2.00 A"/>
    <property type="chains" value="A/B=40-119"/>
</dbReference>
<dbReference type="PDB" id="3MUP">
    <property type="method" value="X-ray"/>
    <property type="resolution" value="2.60 A"/>
    <property type="chains" value="A/B/C/D=251-363"/>
</dbReference>
<dbReference type="PDB" id="3OZ1">
    <property type="method" value="X-ray"/>
    <property type="resolution" value="3.00 A"/>
    <property type="chains" value="A/B/C/D=251-363"/>
</dbReference>
<dbReference type="PDB" id="3T6P">
    <property type="method" value="X-ray"/>
    <property type="resolution" value="1.90 A"/>
    <property type="chains" value="A=265-618"/>
</dbReference>
<dbReference type="PDB" id="3UW4">
    <property type="method" value="X-ray"/>
    <property type="resolution" value="1.79 A"/>
    <property type="chains" value="A=266-343"/>
</dbReference>
<dbReference type="PDB" id="4EB9">
    <property type="method" value="X-ray"/>
    <property type="resolution" value="2.60 A"/>
    <property type="chains" value="A/B/C/D=251-363"/>
</dbReference>
<dbReference type="PDB" id="4HY4">
    <property type="method" value="X-ray"/>
    <property type="resolution" value="1.25 A"/>
    <property type="chains" value="A/B=260-352"/>
</dbReference>
<dbReference type="PDB" id="4HY5">
    <property type="method" value="X-ray"/>
    <property type="resolution" value="1.75 A"/>
    <property type="chains" value="A/B=260-352"/>
</dbReference>
<dbReference type="PDB" id="4KMN">
    <property type="method" value="X-ray"/>
    <property type="resolution" value="1.52 A"/>
    <property type="chains" value="A=260-357"/>
</dbReference>
<dbReference type="PDB" id="4LGE">
    <property type="method" value="X-ray"/>
    <property type="resolution" value="1.55 A"/>
    <property type="chains" value="A/B=260-352"/>
</dbReference>
<dbReference type="PDB" id="4LGU">
    <property type="method" value="X-ray"/>
    <property type="resolution" value="2.00 A"/>
    <property type="chains" value="A/B=260-352"/>
</dbReference>
<dbReference type="PDB" id="4MTI">
    <property type="method" value="X-ray"/>
    <property type="resolution" value="2.15 A"/>
    <property type="chains" value="A/B=260-352"/>
</dbReference>
<dbReference type="PDB" id="4MU7">
    <property type="method" value="X-ray"/>
    <property type="resolution" value="1.79 A"/>
    <property type="chains" value="A/B=260-352"/>
</dbReference>
<dbReference type="PDB" id="5M6N">
    <property type="method" value="X-ray"/>
    <property type="resolution" value="1.80 A"/>
    <property type="chains" value="A/B=266-363"/>
</dbReference>
<dbReference type="PDB" id="6EXW">
    <property type="method" value="X-ray"/>
    <property type="resolution" value="2.20 A"/>
    <property type="chains" value="A/C=250-363"/>
</dbReference>
<dbReference type="PDB" id="6HPR">
    <property type="method" value="X-ray"/>
    <property type="resolution" value="1.70 A"/>
    <property type="chains" value="A=556-618"/>
</dbReference>
<dbReference type="PDB" id="6W74">
    <property type="method" value="X-ray"/>
    <property type="resolution" value="2.11 A"/>
    <property type="chains" value="A=260-352"/>
</dbReference>
<dbReference type="PDB" id="6W7O">
    <property type="method" value="X-ray"/>
    <property type="resolution" value="2.17 A"/>
    <property type="chains" value="C/D=260-352"/>
</dbReference>
<dbReference type="PDB" id="6W8I">
    <property type="method" value="X-ray"/>
    <property type="resolution" value="3.80 A"/>
    <property type="chains" value="D/E/F=260-352"/>
</dbReference>
<dbReference type="PDB" id="7QGJ">
    <property type="method" value="X-ray"/>
    <property type="resolution" value="1.30 A"/>
    <property type="chains" value="A/B=175-256"/>
</dbReference>
<dbReference type="PDB" id="7TRL">
    <property type="method" value="X-ray"/>
    <property type="resolution" value="1.74 A"/>
    <property type="chains" value="A=261-346"/>
</dbReference>
<dbReference type="PDB" id="7TRM">
    <property type="method" value="X-ray"/>
    <property type="resolution" value="2.40 A"/>
    <property type="chains" value="A=261-346"/>
</dbReference>
<dbReference type="PDB" id="8DSF">
    <property type="method" value="X-ray"/>
    <property type="resolution" value="1.50 A"/>
    <property type="chains" value="A/B/C/D=260-352"/>
</dbReference>
<dbReference type="PDB" id="8DSO">
    <property type="method" value="X-ray"/>
    <property type="resolution" value="2.33 A"/>
    <property type="chains" value="D=260-352"/>
</dbReference>
<dbReference type="PDBsum" id="1QBH"/>
<dbReference type="PDBsum" id="2L9M"/>
<dbReference type="PDBsum" id="3D9T"/>
<dbReference type="PDBsum" id="3D9U"/>
<dbReference type="PDBsum" id="3M1D"/>
<dbReference type="PDBsum" id="3MUP"/>
<dbReference type="PDBsum" id="3OZ1"/>
<dbReference type="PDBsum" id="3T6P"/>
<dbReference type="PDBsum" id="3UW4"/>
<dbReference type="PDBsum" id="4EB9"/>
<dbReference type="PDBsum" id="4HY4"/>
<dbReference type="PDBsum" id="4HY5"/>
<dbReference type="PDBsum" id="4KMN"/>
<dbReference type="PDBsum" id="4LGE"/>
<dbReference type="PDBsum" id="4LGU"/>
<dbReference type="PDBsum" id="4MTI"/>
<dbReference type="PDBsum" id="4MU7"/>
<dbReference type="PDBsum" id="5M6N"/>
<dbReference type="PDBsum" id="6EXW"/>
<dbReference type="PDBsum" id="6HPR"/>
<dbReference type="PDBsum" id="6W74"/>
<dbReference type="PDBsum" id="6W7O"/>
<dbReference type="PDBsum" id="6W8I"/>
<dbReference type="PDBsum" id="7QGJ"/>
<dbReference type="PDBsum" id="7TRL"/>
<dbReference type="PDBsum" id="7TRM"/>
<dbReference type="PDBsum" id="8DSF"/>
<dbReference type="PDBsum" id="8DSO"/>
<dbReference type="BMRB" id="Q13490"/>
<dbReference type="SMR" id="Q13490"/>
<dbReference type="BioGRID" id="106826">
    <property type="interactions" value="239"/>
</dbReference>
<dbReference type="ComplexPortal" id="CPX-8828">
    <property type="entry name" value="sTNF-TNR1A receptor-ligand core complex, BIRC2 variant"/>
</dbReference>
<dbReference type="ComplexPortal" id="CPX-8932">
    <property type="entry name" value="mTNF-TNR1A receptor-ligand core complex, BIRC2 variant"/>
</dbReference>
<dbReference type="ComplexPortal" id="CPX-8933">
    <property type="entry name" value="mTNF-TNR1B receptor-ligand core complex, BIRC2 variant"/>
</dbReference>
<dbReference type="CORUM" id="Q13490"/>
<dbReference type="DIP" id="DIP-33485N"/>
<dbReference type="FunCoup" id="Q13490">
    <property type="interactions" value="3149"/>
</dbReference>
<dbReference type="IntAct" id="Q13490">
    <property type="interactions" value="150"/>
</dbReference>
<dbReference type="MINT" id="Q13490"/>
<dbReference type="STRING" id="9606.ENSP00000477613"/>
<dbReference type="BindingDB" id="Q13490"/>
<dbReference type="ChEMBL" id="CHEMBL5462"/>
<dbReference type="DrugBank" id="DB16095">
    <property type="generic name" value="APG-1387"/>
</dbReference>
<dbReference type="DrugBank" id="DB11782">
    <property type="generic name" value="Birinapant"/>
</dbReference>
<dbReference type="DrugBank" id="DB12085">
    <property type="generic name" value="LCL-161"/>
</dbReference>
<dbReference type="DrugBank" id="DB16305">
    <property type="generic name" value="Xevinapant"/>
</dbReference>
<dbReference type="GuidetoPHARMACOLOGY" id="2791"/>
<dbReference type="MEROPS" id="I32.002"/>
<dbReference type="MEROPS" id="I32.003"/>
<dbReference type="MEROPS" id="I32.007"/>
<dbReference type="CarbonylDB" id="Q13490"/>
<dbReference type="GlyGen" id="Q13490">
    <property type="glycosylation" value="3 sites, 1 O-linked glycan (3 sites)"/>
</dbReference>
<dbReference type="iPTMnet" id="Q13490"/>
<dbReference type="PhosphoSitePlus" id="Q13490"/>
<dbReference type="BioMuta" id="BIRC2"/>
<dbReference type="DMDM" id="2497238"/>
<dbReference type="CPTAC" id="CPTAC-790"/>
<dbReference type="CPTAC" id="CPTAC-791"/>
<dbReference type="jPOST" id="Q13490"/>
<dbReference type="MassIVE" id="Q13490"/>
<dbReference type="PaxDb" id="9606-ENSP00000477613"/>
<dbReference type="PeptideAtlas" id="Q13490"/>
<dbReference type="ProteomicsDB" id="5644"/>
<dbReference type="ProteomicsDB" id="59484">
    <molecule id="Q13490-1"/>
</dbReference>
<dbReference type="Pumba" id="Q13490"/>
<dbReference type="Antibodypedia" id="1043">
    <property type="antibodies" value="473 antibodies from 41 providers"/>
</dbReference>
<dbReference type="DNASU" id="329"/>
<dbReference type="Ensembl" id="ENST00000227758.7">
    <molecule id="Q13490-1"/>
    <property type="protein sequence ID" value="ENSP00000227758.2"/>
    <property type="gene ID" value="ENSG00000110330.10"/>
</dbReference>
<dbReference type="Ensembl" id="ENST00000530675.5">
    <molecule id="Q13490-2"/>
    <property type="protein sequence ID" value="ENSP00000431723.1"/>
    <property type="gene ID" value="ENSG00000110330.10"/>
</dbReference>
<dbReference type="Ensembl" id="ENST00000613397.4">
    <molecule id="Q13490-1"/>
    <property type="protein sequence ID" value="ENSP00000477613.1"/>
    <property type="gene ID" value="ENSG00000110330.10"/>
</dbReference>
<dbReference type="GeneID" id="329"/>
<dbReference type="KEGG" id="hsa:329"/>
<dbReference type="MANE-Select" id="ENST00000227758.7">
    <property type="protein sequence ID" value="ENSP00000227758.2"/>
    <property type="RefSeq nucleotide sequence ID" value="NM_001166.5"/>
    <property type="RefSeq protein sequence ID" value="NP_001157.1"/>
</dbReference>
<dbReference type="UCSC" id="uc001pgy.5">
    <molecule id="Q13490-1"/>
    <property type="organism name" value="human"/>
</dbReference>
<dbReference type="AGR" id="HGNC:590"/>
<dbReference type="CTD" id="329"/>
<dbReference type="DisGeNET" id="329"/>
<dbReference type="GeneCards" id="BIRC2"/>
<dbReference type="HGNC" id="HGNC:590">
    <property type="gene designation" value="BIRC2"/>
</dbReference>
<dbReference type="HPA" id="ENSG00000110330">
    <property type="expression patterns" value="Low tissue specificity"/>
</dbReference>
<dbReference type="MalaCards" id="BIRC2"/>
<dbReference type="MIM" id="601712">
    <property type="type" value="gene"/>
</dbReference>
<dbReference type="neXtProt" id="NX_Q13490"/>
<dbReference type="OpenTargets" id="ENSG00000110330"/>
<dbReference type="PharmGKB" id="PA25359"/>
<dbReference type="VEuPathDB" id="HostDB:ENSG00000110330"/>
<dbReference type="eggNOG" id="KOG1101">
    <property type="taxonomic scope" value="Eukaryota"/>
</dbReference>
<dbReference type="GeneTree" id="ENSGT00940000154175"/>
<dbReference type="HOGENOM" id="CLU_016347_1_1_1"/>
<dbReference type="InParanoid" id="Q13490"/>
<dbReference type="OMA" id="LRDCDPV"/>
<dbReference type="OrthoDB" id="4034597at2759"/>
<dbReference type="PAN-GO" id="Q13490">
    <property type="GO annotations" value="8 GO annotations based on evolutionary models"/>
</dbReference>
<dbReference type="PhylomeDB" id="Q13490"/>
<dbReference type="TreeFam" id="TF105356"/>
<dbReference type="PathwayCommons" id="Q13490"/>
<dbReference type="Reactome" id="R-HSA-111465">
    <property type="pathway name" value="Apoptotic cleavage of cellular proteins"/>
</dbReference>
<dbReference type="Reactome" id="R-HSA-168638">
    <property type="pathway name" value="NOD1/2 Signaling Pathway"/>
</dbReference>
<dbReference type="Reactome" id="R-HSA-168927">
    <property type="pathway name" value="TICAM1, RIP1-mediated IKK complex recruitment"/>
</dbReference>
<dbReference type="Reactome" id="R-HSA-5213460">
    <property type="pathway name" value="RIPK1-mediated regulated necrosis"/>
</dbReference>
<dbReference type="Reactome" id="R-HSA-5357786">
    <property type="pathway name" value="TNFR1-induced proapoptotic signaling"/>
</dbReference>
<dbReference type="Reactome" id="R-HSA-5357905">
    <property type="pathway name" value="Regulation of TNFR1 signaling"/>
</dbReference>
<dbReference type="Reactome" id="R-HSA-5357956">
    <property type="pathway name" value="TNFR1-induced NF-kappa-B signaling pathway"/>
</dbReference>
<dbReference type="Reactome" id="R-HSA-5668541">
    <property type="pathway name" value="TNFR2 non-canonical NF-kB pathway"/>
</dbReference>
<dbReference type="Reactome" id="R-HSA-5675482">
    <property type="pathway name" value="Regulation of necroptotic cell death"/>
</dbReference>
<dbReference type="Reactome" id="R-HSA-5676594">
    <property type="pathway name" value="TNF receptor superfamily (TNFSF) members mediating non-canonical NF-kB pathway"/>
</dbReference>
<dbReference type="Reactome" id="R-HSA-5689880">
    <property type="pathway name" value="Ub-specific processing proteases"/>
</dbReference>
<dbReference type="Reactome" id="R-HSA-937041">
    <property type="pathway name" value="IKK complex recruitment mediated by RIP1"/>
</dbReference>
<dbReference type="SignaLink" id="Q13490"/>
<dbReference type="SIGNOR" id="Q13490"/>
<dbReference type="BioGRID-ORCS" id="329">
    <property type="hits" value="96 hits in 1199 CRISPR screens"/>
</dbReference>
<dbReference type="ChiTaRS" id="BIRC2">
    <property type="organism name" value="human"/>
</dbReference>
<dbReference type="EvolutionaryTrace" id="Q13490"/>
<dbReference type="GeneWiki" id="BIRC2"/>
<dbReference type="GenomeRNAi" id="329"/>
<dbReference type="Pharos" id="Q13490">
    <property type="development level" value="Tchem"/>
</dbReference>
<dbReference type="PRO" id="PR:Q13490"/>
<dbReference type="Proteomes" id="UP000005640">
    <property type="component" value="Chromosome 11"/>
</dbReference>
<dbReference type="RNAct" id="Q13490">
    <property type="molecule type" value="protein"/>
</dbReference>
<dbReference type="Bgee" id="ENSG00000110330">
    <property type="expression patterns" value="Expressed in cartilage tissue and 213 other cell types or tissues"/>
</dbReference>
<dbReference type="ExpressionAtlas" id="Q13490">
    <property type="expression patterns" value="baseline and differential"/>
</dbReference>
<dbReference type="GO" id="GO:0035631">
    <property type="term" value="C:CD40 receptor complex"/>
    <property type="evidence" value="ECO:0000250"/>
    <property type="project" value="BHF-UCL"/>
</dbReference>
<dbReference type="GO" id="GO:0005737">
    <property type="term" value="C:cytoplasm"/>
    <property type="evidence" value="ECO:0000314"/>
    <property type="project" value="UniProtKB"/>
</dbReference>
<dbReference type="GO" id="GO:0009898">
    <property type="term" value="C:cytoplasmic side of plasma membrane"/>
    <property type="evidence" value="ECO:0000250"/>
    <property type="project" value="BHF-UCL"/>
</dbReference>
<dbReference type="GO" id="GO:0005829">
    <property type="term" value="C:cytosol"/>
    <property type="evidence" value="ECO:0000304"/>
    <property type="project" value="Reactome"/>
</dbReference>
<dbReference type="GO" id="GO:0005634">
    <property type="term" value="C:nucleus"/>
    <property type="evidence" value="ECO:0000314"/>
    <property type="project" value="UniProtKB"/>
</dbReference>
<dbReference type="GO" id="GO:0001741">
    <property type="term" value="C:XY body"/>
    <property type="evidence" value="ECO:0007669"/>
    <property type="project" value="Ensembl"/>
</dbReference>
<dbReference type="GO" id="GO:0043027">
    <property type="term" value="F:cysteine-type endopeptidase inhibitor activity involved in apoptotic process"/>
    <property type="evidence" value="ECO:0000318"/>
    <property type="project" value="GO_Central"/>
</dbReference>
<dbReference type="GO" id="GO:0098770">
    <property type="term" value="F:FBXO family protein binding"/>
    <property type="evidence" value="ECO:0000353"/>
    <property type="project" value="ParkinsonsUK-UCL"/>
</dbReference>
<dbReference type="GO" id="GO:0042802">
    <property type="term" value="F:identical protein binding"/>
    <property type="evidence" value="ECO:0000353"/>
    <property type="project" value="IntAct"/>
</dbReference>
<dbReference type="GO" id="GO:0044877">
    <property type="term" value="F:protein-containing complex binding"/>
    <property type="evidence" value="ECO:0007669"/>
    <property type="project" value="Ensembl"/>
</dbReference>
<dbReference type="GO" id="GO:0051087">
    <property type="term" value="F:protein-folding chaperone binding"/>
    <property type="evidence" value="ECO:0000353"/>
    <property type="project" value="UniProtKB"/>
</dbReference>
<dbReference type="GO" id="GO:0003713">
    <property type="term" value="F:transcription coactivator activity"/>
    <property type="evidence" value="ECO:0000315"/>
    <property type="project" value="UniProtKB"/>
</dbReference>
<dbReference type="GO" id="GO:0016740">
    <property type="term" value="F:transferase activity"/>
    <property type="evidence" value="ECO:0000269"/>
    <property type="project" value="Reactome"/>
</dbReference>
<dbReference type="GO" id="GO:0043130">
    <property type="term" value="F:ubiquitin binding"/>
    <property type="evidence" value="ECO:0000314"/>
    <property type="project" value="ParkinsonsUK-UCL"/>
</dbReference>
<dbReference type="GO" id="GO:0061630">
    <property type="term" value="F:ubiquitin protein ligase activity"/>
    <property type="evidence" value="ECO:0000318"/>
    <property type="project" value="GO_Central"/>
</dbReference>
<dbReference type="GO" id="GO:0004842">
    <property type="term" value="F:ubiquitin-protein transferase activity"/>
    <property type="evidence" value="ECO:0000314"/>
    <property type="project" value="UniProtKB"/>
</dbReference>
<dbReference type="GO" id="GO:0008270">
    <property type="term" value="F:zinc ion binding"/>
    <property type="evidence" value="ECO:0000314"/>
    <property type="project" value="UniProtKB"/>
</dbReference>
<dbReference type="GO" id="GO:0006915">
    <property type="term" value="P:apoptotic process"/>
    <property type="evidence" value="ECO:0007669"/>
    <property type="project" value="UniProtKB-KW"/>
</dbReference>
<dbReference type="GO" id="GO:0007249">
    <property type="term" value="P:canonical NF-kappaB signal transduction"/>
    <property type="evidence" value="ECO:0000304"/>
    <property type="project" value="Reactome"/>
</dbReference>
<dbReference type="GO" id="GO:0007166">
    <property type="term" value="P:cell surface receptor signaling pathway"/>
    <property type="evidence" value="ECO:0000304"/>
    <property type="project" value="ProtInc"/>
</dbReference>
<dbReference type="GO" id="GO:0070266">
    <property type="term" value="P:necroptotic process"/>
    <property type="evidence" value="ECO:0007669"/>
    <property type="project" value="Ensembl"/>
</dbReference>
<dbReference type="GO" id="GO:0043066">
    <property type="term" value="P:negative regulation of apoptotic process"/>
    <property type="evidence" value="ECO:0000314"/>
    <property type="project" value="UniProtKB"/>
</dbReference>
<dbReference type="GO" id="GO:0060546">
    <property type="term" value="P:negative regulation of necroptotic process"/>
    <property type="evidence" value="ECO:0000318"/>
    <property type="project" value="GO_Central"/>
</dbReference>
<dbReference type="GO" id="GO:1902443">
    <property type="term" value="P:negative regulation of ripoptosome assembly involved in necroptotic process"/>
    <property type="evidence" value="ECO:0007669"/>
    <property type="project" value="Ensembl"/>
</dbReference>
<dbReference type="GO" id="GO:0038061">
    <property type="term" value="P:non-canonical NF-kappaB signal transduction"/>
    <property type="evidence" value="ECO:0000304"/>
    <property type="project" value="UniProtKB"/>
</dbReference>
<dbReference type="GO" id="GO:0001890">
    <property type="term" value="P:placenta development"/>
    <property type="evidence" value="ECO:0007669"/>
    <property type="project" value="Ensembl"/>
</dbReference>
<dbReference type="GO" id="GO:0043123">
    <property type="term" value="P:positive regulation of canonical NF-kappaB signal transduction"/>
    <property type="evidence" value="ECO:0000270"/>
    <property type="project" value="UniProtKB"/>
</dbReference>
<dbReference type="GO" id="GO:1902524">
    <property type="term" value="P:positive regulation of protein K48-linked ubiquitination"/>
    <property type="evidence" value="ECO:0000314"/>
    <property type="project" value="UniProtKB"/>
</dbReference>
<dbReference type="GO" id="GO:1902523">
    <property type="term" value="P:positive regulation of protein K63-linked ubiquitination"/>
    <property type="evidence" value="ECO:0000314"/>
    <property type="project" value="UniProtKB"/>
</dbReference>
<dbReference type="GO" id="GO:1902527">
    <property type="term" value="P:positive regulation of protein monoubiquitination"/>
    <property type="evidence" value="ECO:0000314"/>
    <property type="project" value="UniProtKB"/>
</dbReference>
<dbReference type="GO" id="GO:0031398">
    <property type="term" value="P:positive regulation of protein ubiquitination"/>
    <property type="evidence" value="ECO:0000318"/>
    <property type="project" value="GO_Central"/>
</dbReference>
<dbReference type="GO" id="GO:0043161">
    <property type="term" value="P:proteasome-mediated ubiquitin-dependent protein catabolic process"/>
    <property type="evidence" value="ECO:0000314"/>
    <property type="project" value="UniProtKB"/>
</dbReference>
<dbReference type="GO" id="GO:0000209">
    <property type="term" value="P:protein polyubiquitination"/>
    <property type="evidence" value="ECO:0000314"/>
    <property type="project" value="UniProtKB"/>
</dbReference>
<dbReference type="GO" id="GO:0042981">
    <property type="term" value="P:regulation of apoptotic process"/>
    <property type="evidence" value="ECO:0000315"/>
    <property type="project" value="UniProtKB"/>
</dbReference>
<dbReference type="GO" id="GO:0051726">
    <property type="term" value="P:regulation of cell cycle"/>
    <property type="evidence" value="ECO:0000314"/>
    <property type="project" value="UniProtKB"/>
</dbReference>
<dbReference type="GO" id="GO:0045595">
    <property type="term" value="P:regulation of cell differentiation"/>
    <property type="evidence" value="ECO:0000304"/>
    <property type="project" value="UniProtKB"/>
</dbReference>
<dbReference type="GO" id="GO:0042127">
    <property type="term" value="P:regulation of cell population proliferation"/>
    <property type="evidence" value="ECO:0000304"/>
    <property type="project" value="UniProtKB"/>
</dbReference>
<dbReference type="GO" id="GO:0050727">
    <property type="term" value="P:regulation of inflammatory response"/>
    <property type="evidence" value="ECO:0000304"/>
    <property type="project" value="UniProtKB"/>
</dbReference>
<dbReference type="GO" id="GO:0045088">
    <property type="term" value="P:regulation of innate immune response"/>
    <property type="evidence" value="ECO:0000304"/>
    <property type="project" value="UniProtKB"/>
</dbReference>
<dbReference type="GO" id="GO:0060544">
    <property type="term" value="P:regulation of necroptotic process"/>
    <property type="evidence" value="ECO:0000315"/>
    <property type="project" value="UniProtKB"/>
</dbReference>
<dbReference type="GO" id="GO:1901222">
    <property type="term" value="P:regulation of non-canonical NF-kappaB signal transduction"/>
    <property type="evidence" value="ECO:0007669"/>
    <property type="project" value="Ensembl"/>
</dbReference>
<dbReference type="GO" id="GO:0070424">
    <property type="term" value="P:regulation of nucleotide-binding domain, leucine rich repeat containing receptor signaling pathway"/>
    <property type="evidence" value="ECO:0000304"/>
    <property type="project" value="UniProtKB"/>
</dbReference>
<dbReference type="GO" id="GO:2000377">
    <property type="term" value="P:regulation of reactive oxygen species metabolic process"/>
    <property type="evidence" value="ECO:0007669"/>
    <property type="project" value="Ensembl"/>
</dbReference>
<dbReference type="GO" id="GO:0039535">
    <property type="term" value="P:regulation of RIG-I signaling pathway"/>
    <property type="evidence" value="ECO:0000304"/>
    <property type="project" value="UniProtKB"/>
</dbReference>
<dbReference type="GO" id="GO:0034121">
    <property type="term" value="P:regulation of toll-like receptor signaling pathway"/>
    <property type="evidence" value="ECO:0000304"/>
    <property type="project" value="UniProtKB"/>
</dbReference>
<dbReference type="GO" id="GO:0051591">
    <property type="term" value="P:response to cAMP"/>
    <property type="evidence" value="ECO:0007669"/>
    <property type="project" value="Ensembl"/>
</dbReference>
<dbReference type="GO" id="GO:0045471">
    <property type="term" value="P:response to ethanol"/>
    <property type="evidence" value="ECO:0007669"/>
    <property type="project" value="Ensembl"/>
</dbReference>
<dbReference type="GO" id="GO:0001666">
    <property type="term" value="P:response to hypoxia"/>
    <property type="evidence" value="ECO:0007669"/>
    <property type="project" value="Ensembl"/>
</dbReference>
<dbReference type="GO" id="GO:0033209">
    <property type="term" value="P:tumor necrosis factor-mediated signaling pathway"/>
    <property type="evidence" value="ECO:0000304"/>
    <property type="project" value="Reactome"/>
</dbReference>
<dbReference type="CDD" id="cd00022">
    <property type="entry name" value="BIR"/>
    <property type="match status" value="3"/>
</dbReference>
<dbReference type="CDD" id="cd08329">
    <property type="entry name" value="CARD_BIRC2_BIRC3"/>
    <property type="match status" value="1"/>
</dbReference>
<dbReference type="CDD" id="cd16713">
    <property type="entry name" value="RING-HC_BIRC2_3_7"/>
    <property type="match status" value="1"/>
</dbReference>
<dbReference type="CDD" id="cd14394">
    <property type="entry name" value="UBA_BIRC2_3"/>
    <property type="match status" value="1"/>
</dbReference>
<dbReference type="FunFam" id="1.10.1170.10:FF:000005">
    <property type="entry name" value="Baculoviral IAP repeat containing 2"/>
    <property type="match status" value="1"/>
</dbReference>
<dbReference type="FunFam" id="1.10.1170.10:FF:000006">
    <property type="entry name" value="Baculoviral IAP repeat containing 2"/>
    <property type="match status" value="1"/>
</dbReference>
<dbReference type="FunFam" id="1.10.1170.10:FF:000010">
    <property type="entry name" value="Baculoviral IAP repeat containing 2"/>
    <property type="match status" value="1"/>
</dbReference>
<dbReference type="FunFam" id="3.30.40.10:FF:000184">
    <property type="entry name" value="Baculoviral IAP repeat containing 2"/>
    <property type="match status" value="1"/>
</dbReference>
<dbReference type="FunFam" id="1.10.1170.10:FF:000002">
    <property type="entry name" value="Baculoviral IAP repeat containing 7"/>
    <property type="match status" value="1"/>
</dbReference>
<dbReference type="FunFam" id="1.10.533.10:FF:000012">
    <property type="entry name" value="baculoviral IAP repeat-containing protein 2"/>
    <property type="match status" value="1"/>
</dbReference>
<dbReference type="FunFam" id="1.10.8.10:FF:000035">
    <property type="entry name" value="baculoviral IAP repeat-containing protein 2"/>
    <property type="match status" value="1"/>
</dbReference>
<dbReference type="Gene3D" id="1.10.533.10">
    <property type="entry name" value="Death Domain, Fas"/>
    <property type="match status" value="1"/>
</dbReference>
<dbReference type="Gene3D" id="1.10.8.10">
    <property type="entry name" value="DNA helicase RuvA subunit, C-terminal domain"/>
    <property type="match status" value="1"/>
</dbReference>
<dbReference type="Gene3D" id="1.10.1170.10">
    <property type="entry name" value="Inhibitor Of Apoptosis Protein (2mihbC-IAP-1), Chain A"/>
    <property type="match status" value="3"/>
</dbReference>
<dbReference type="InterPro" id="IPR001370">
    <property type="entry name" value="BIR_rpt"/>
</dbReference>
<dbReference type="InterPro" id="IPR048875">
    <property type="entry name" value="BIRC2-3-like_UBA"/>
</dbReference>
<dbReference type="InterPro" id="IPR041933">
    <property type="entry name" value="BIRC2/BIRC3_UBA"/>
</dbReference>
<dbReference type="InterPro" id="IPR001315">
    <property type="entry name" value="CARD"/>
</dbReference>
<dbReference type="InterPro" id="IPR011029">
    <property type="entry name" value="DEATH-like_dom_sf"/>
</dbReference>
<dbReference type="InterPro" id="IPR050784">
    <property type="entry name" value="IAP"/>
</dbReference>
<dbReference type="InterPro" id="IPR001841">
    <property type="entry name" value="Znf_RING"/>
</dbReference>
<dbReference type="PANTHER" id="PTHR10044:SF79">
    <property type="entry name" value="BACULOVIRAL IAP REPEAT-CONTAINING PROTEIN 2"/>
    <property type="match status" value="1"/>
</dbReference>
<dbReference type="PANTHER" id="PTHR10044">
    <property type="entry name" value="INHIBITOR OF APOPTOSIS"/>
    <property type="match status" value="1"/>
</dbReference>
<dbReference type="Pfam" id="PF00653">
    <property type="entry name" value="BIR"/>
    <property type="match status" value="3"/>
</dbReference>
<dbReference type="Pfam" id="PF00619">
    <property type="entry name" value="CARD"/>
    <property type="match status" value="1"/>
</dbReference>
<dbReference type="Pfam" id="PF21290">
    <property type="entry name" value="UBA_BIRC2-3"/>
    <property type="match status" value="1"/>
</dbReference>
<dbReference type="Pfam" id="PF13920">
    <property type="entry name" value="zf-C3HC4_3"/>
    <property type="match status" value="1"/>
</dbReference>
<dbReference type="SMART" id="SM00238">
    <property type="entry name" value="BIR"/>
    <property type="match status" value="3"/>
</dbReference>
<dbReference type="SMART" id="SM00114">
    <property type="entry name" value="CARD"/>
    <property type="match status" value="1"/>
</dbReference>
<dbReference type="SMART" id="SM00184">
    <property type="entry name" value="RING"/>
    <property type="match status" value="1"/>
</dbReference>
<dbReference type="SUPFAM" id="SSF47986">
    <property type="entry name" value="DEATH domain"/>
    <property type="match status" value="1"/>
</dbReference>
<dbReference type="SUPFAM" id="SSF57924">
    <property type="entry name" value="Inhibitor of apoptosis (IAP) repeat"/>
    <property type="match status" value="3"/>
</dbReference>
<dbReference type="PROSITE" id="PS01282">
    <property type="entry name" value="BIR_REPEAT_1"/>
    <property type="match status" value="3"/>
</dbReference>
<dbReference type="PROSITE" id="PS50143">
    <property type="entry name" value="BIR_REPEAT_2"/>
    <property type="match status" value="3"/>
</dbReference>
<dbReference type="PROSITE" id="PS50209">
    <property type="entry name" value="CARD"/>
    <property type="match status" value="1"/>
</dbReference>
<dbReference type="PROSITE" id="PS50089">
    <property type="entry name" value="ZF_RING_2"/>
    <property type="match status" value="1"/>
</dbReference>
<reference key="1">
    <citation type="journal article" date="1995" name="Cell">
        <title>The TNFR2-TRAF signaling complex contains two novel proteins related to baculoviral inhibitor of apoptosis proteins.</title>
        <authorList>
            <person name="Rothe M."/>
            <person name="Pan M.-G."/>
            <person name="Henzel W.J."/>
            <person name="Ayres T.M."/>
            <person name="Goeddel D.V."/>
        </authorList>
    </citation>
    <scope>NUCLEOTIDE SEQUENCE [MRNA] (ISOFORM 1)</scope>
</reference>
<reference key="2">
    <citation type="journal article" date="1996" name="Nature">
        <title>Suppression of apoptosis in mammalian cells by NAIP and a related family of IAP genes.</title>
        <authorList>
            <person name="Liston P."/>
            <person name="Roy N."/>
            <person name="Tamai K."/>
            <person name="Lefebvre C."/>
            <person name="Baird S."/>
            <person name="Cherton-Horvat G."/>
            <person name="Farahani R."/>
            <person name="McLean M."/>
            <person name="Ikeda J."/>
            <person name="Mackenzie A."/>
            <person name="Korneluk R.G."/>
        </authorList>
    </citation>
    <scope>NUCLEOTIDE SEQUENCE [MRNA] (ISOFORM 1)</scope>
    <source>
        <tissue>Liver</tissue>
    </source>
</reference>
<reference key="3">
    <citation type="journal article" date="1996" name="Proc. Natl. Acad. Sci. U.S.A.">
        <title>Cloning and expression of apoptosis inhibitory protein homologs that function to inhibit apoptosis and/or bind tumor necrosis factor receptor-associated factors.</title>
        <authorList>
            <person name="Uren A.G."/>
            <person name="Pakusch M."/>
            <person name="Hawkins C.J."/>
            <person name="Puls K.L."/>
            <person name="Vaux D.L."/>
        </authorList>
    </citation>
    <scope>NUCLEOTIDE SEQUENCE [MRNA] (ISOFORM 1)</scope>
    <source>
        <tissue>Fetal liver</tissue>
    </source>
</reference>
<reference key="4">
    <citation type="submission" date="2005-05" db="EMBL/GenBank/DDBJ databases">
        <authorList>
            <consortium name="NIEHS SNPs program"/>
        </authorList>
    </citation>
    <scope>NUCLEOTIDE SEQUENCE [GENOMIC DNA]</scope>
    <scope>VARIANTS VAL-453; VAL-506 AND SER-549</scope>
</reference>
<reference key="5">
    <citation type="journal article" date="2004" name="Nat. Genet.">
        <title>Complete sequencing and characterization of 21,243 full-length human cDNAs.</title>
        <authorList>
            <person name="Ota T."/>
            <person name="Suzuki Y."/>
            <person name="Nishikawa T."/>
            <person name="Otsuki T."/>
            <person name="Sugiyama T."/>
            <person name="Irie R."/>
            <person name="Wakamatsu A."/>
            <person name="Hayashi K."/>
            <person name="Sato H."/>
            <person name="Nagai K."/>
            <person name="Kimura K."/>
            <person name="Makita H."/>
            <person name="Sekine M."/>
            <person name="Obayashi M."/>
            <person name="Nishi T."/>
            <person name="Shibahara T."/>
            <person name="Tanaka T."/>
            <person name="Ishii S."/>
            <person name="Yamamoto J."/>
            <person name="Saito K."/>
            <person name="Kawai Y."/>
            <person name="Isono Y."/>
            <person name="Nakamura Y."/>
            <person name="Nagahari K."/>
            <person name="Murakami K."/>
            <person name="Yasuda T."/>
            <person name="Iwayanagi T."/>
            <person name="Wagatsuma M."/>
            <person name="Shiratori A."/>
            <person name="Sudo H."/>
            <person name="Hosoiri T."/>
            <person name="Kaku Y."/>
            <person name="Kodaira H."/>
            <person name="Kondo H."/>
            <person name="Sugawara M."/>
            <person name="Takahashi M."/>
            <person name="Kanda K."/>
            <person name="Yokoi T."/>
            <person name="Furuya T."/>
            <person name="Kikkawa E."/>
            <person name="Omura Y."/>
            <person name="Abe K."/>
            <person name="Kamihara K."/>
            <person name="Katsuta N."/>
            <person name="Sato K."/>
            <person name="Tanikawa M."/>
            <person name="Yamazaki M."/>
            <person name="Ninomiya K."/>
            <person name="Ishibashi T."/>
            <person name="Yamashita H."/>
            <person name="Murakawa K."/>
            <person name="Fujimori K."/>
            <person name="Tanai H."/>
            <person name="Kimata M."/>
            <person name="Watanabe M."/>
            <person name="Hiraoka S."/>
            <person name="Chiba Y."/>
            <person name="Ishida S."/>
            <person name="Ono Y."/>
            <person name="Takiguchi S."/>
            <person name="Watanabe S."/>
            <person name="Yosida M."/>
            <person name="Hotuta T."/>
            <person name="Kusano J."/>
            <person name="Kanehori K."/>
            <person name="Takahashi-Fujii A."/>
            <person name="Hara H."/>
            <person name="Tanase T.-O."/>
            <person name="Nomura Y."/>
            <person name="Togiya S."/>
            <person name="Komai F."/>
            <person name="Hara R."/>
            <person name="Takeuchi K."/>
            <person name="Arita M."/>
            <person name="Imose N."/>
            <person name="Musashino K."/>
            <person name="Yuuki H."/>
            <person name="Oshima A."/>
            <person name="Sasaki N."/>
            <person name="Aotsuka S."/>
            <person name="Yoshikawa Y."/>
            <person name="Matsunawa H."/>
            <person name="Ichihara T."/>
            <person name="Shiohata N."/>
            <person name="Sano S."/>
            <person name="Moriya S."/>
            <person name="Momiyama H."/>
            <person name="Satoh N."/>
            <person name="Takami S."/>
            <person name="Terashima Y."/>
            <person name="Suzuki O."/>
            <person name="Nakagawa S."/>
            <person name="Senoh A."/>
            <person name="Mizoguchi H."/>
            <person name="Goto Y."/>
            <person name="Shimizu F."/>
            <person name="Wakebe H."/>
            <person name="Hishigaki H."/>
            <person name="Watanabe T."/>
            <person name="Sugiyama A."/>
            <person name="Takemoto M."/>
            <person name="Kawakami B."/>
            <person name="Yamazaki M."/>
            <person name="Watanabe K."/>
            <person name="Kumagai A."/>
            <person name="Itakura S."/>
            <person name="Fukuzumi Y."/>
            <person name="Fujimori Y."/>
            <person name="Komiyama M."/>
            <person name="Tashiro H."/>
            <person name="Tanigami A."/>
            <person name="Fujiwara T."/>
            <person name="Ono T."/>
            <person name="Yamada K."/>
            <person name="Fujii Y."/>
            <person name="Ozaki K."/>
            <person name="Hirao M."/>
            <person name="Ohmori Y."/>
            <person name="Kawabata A."/>
            <person name="Hikiji T."/>
            <person name="Kobatake N."/>
            <person name="Inagaki H."/>
            <person name="Ikema Y."/>
            <person name="Okamoto S."/>
            <person name="Okitani R."/>
            <person name="Kawakami T."/>
            <person name="Noguchi S."/>
            <person name="Itoh T."/>
            <person name="Shigeta K."/>
            <person name="Senba T."/>
            <person name="Matsumura K."/>
            <person name="Nakajima Y."/>
            <person name="Mizuno T."/>
            <person name="Morinaga M."/>
            <person name="Sasaki M."/>
            <person name="Togashi T."/>
            <person name="Oyama M."/>
            <person name="Hata H."/>
            <person name="Watanabe M."/>
            <person name="Komatsu T."/>
            <person name="Mizushima-Sugano J."/>
            <person name="Satoh T."/>
            <person name="Shirai Y."/>
            <person name="Takahashi Y."/>
            <person name="Nakagawa K."/>
            <person name="Okumura K."/>
            <person name="Nagase T."/>
            <person name="Nomura N."/>
            <person name="Kikuchi H."/>
            <person name="Masuho Y."/>
            <person name="Yamashita R."/>
            <person name="Nakai K."/>
            <person name="Yada T."/>
            <person name="Nakamura Y."/>
            <person name="Ohara O."/>
            <person name="Isogai T."/>
            <person name="Sugano S."/>
        </authorList>
    </citation>
    <scope>NUCLEOTIDE SEQUENCE [LARGE SCALE MRNA] (ISOFORMS 1 AND 2)</scope>
    <source>
        <tissue>Thymus</tissue>
    </source>
</reference>
<reference key="6">
    <citation type="journal article" date="2006" name="Nature">
        <title>Human chromosome 11 DNA sequence and analysis including novel gene identification.</title>
        <authorList>
            <person name="Taylor T.D."/>
            <person name="Noguchi H."/>
            <person name="Totoki Y."/>
            <person name="Toyoda A."/>
            <person name="Kuroki Y."/>
            <person name="Dewar K."/>
            <person name="Lloyd C."/>
            <person name="Itoh T."/>
            <person name="Takeda T."/>
            <person name="Kim D.-W."/>
            <person name="She X."/>
            <person name="Barlow K.F."/>
            <person name="Bloom T."/>
            <person name="Bruford E."/>
            <person name="Chang J.L."/>
            <person name="Cuomo C.A."/>
            <person name="Eichler E."/>
            <person name="FitzGerald M.G."/>
            <person name="Jaffe D.B."/>
            <person name="LaButti K."/>
            <person name="Nicol R."/>
            <person name="Park H.-S."/>
            <person name="Seaman C."/>
            <person name="Sougnez C."/>
            <person name="Yang X."/>
            <person name="Zimmer A.R."/>
            <person name="Zody M.C."/>
            <person name="Birren B.W."/>
            <person name="Nusbaum C."/>
            <person name="Fujiyama A."/>
            <person name="Hattori M."/>
            <person name="Rogers J."/>
            <person name="Lander E.S."/>
            <person name="Sakaki Y."/>
        </authorList>
    </citation>
    <scope>NUCLEOTIDE SEQUENCE [LARGE SCALE GENOMIC DNA]</scope>
</reference>
<reference key="7">
    <citation type="journal article" date="2004" name="Genome Res.">
        <title>The status, quality, and expansion of the NIH full-length cDNA project: the Mammalian Gene Collection (MGC).</title>
        <authorList>
            <consortium name="The MGC Project Team"/>
        </authorList>
    </citation>
    <scope>NUCLEOTIDE SEQUENCE [LARGE SCALE MRNA] (ISOFORM 1)</scope>
    <source>
        <tissue>Testis</tissue>
        <tissue>Uterus</tissue>
    </source>
</reference>
<reference key="8">
    <citation type="journal article" date="2005" name="Cancer Res.">
        <title>cIAP1 Localizes to the nuclear compartment and modulates the cell cycle.</title>
        <authorList>
            <person name="Samuel T."/>
            <person name="Okada K."/>
            <person name="Hyer M."/>
            <person name="Welsh K."/>
            <person name="Zapata J.M."/>
            <person name="Reed J.C."/>
        </authorList>
    </citation>
    <scope>FUNCTION</scope>
    <scope>SUBCELLULAR LOCATION</scope>
    <scope>INTERACTION WITH BIRC5/SURVIVIN</scope>
</reference>
<reference key="9">
    <citation type="journal article" date="2007" name="Mol. Cell">
        <title>c-IAP1 cooperates with Myc by acting as a ubiquitin ligase for Mad1.</title>
        <authorList>
            <person name="Xu L."/>
            <person name="Zhu J."/>
            <person name="Hu X."/>
            <person name="Zhu H."/>
            <person name="Kim H.T."/>
            <person name="LaBaer J."/>
            <person name="Goldberg A."/>
            <person name="Yuan J."/>
        </authorList>
    </citation>
    <scope>FUNCTION IN THE UBIQUITINATION OF MXD1/MAD1</scope>
    <scope>CATALYTIC ACTIVITY</scope>
</reference>
<reference key="10">
    <citation type="journal article" date="2008" name="Cell Cycle">
        <title>IAPs: more than just inhibitors of apoptosis proteins.</title>
        <authorList>
            <person name="Dubrez-Daloz L."/>
            <person name="Dupoux A."/>
            <person name="Cartier J."/>
        </authorList>
    </citation>
    <scope>REVIEW ON FUNCTION</scope>
</reference>
<reference key="11">
    <citation type="journal article" date="2008" name="Cell Death Differ.">
        <title>Identification of an antiapoptotic protein complex at death receptors.</title>
        <authorList>
            <person name="Sun M."/>
            <person name="Song L."/>
            <person name="Li Y."/>
            <person name="Zhou T."/>
            <person name="Jope R.S."/>
        </authorList>
    </citation>
    <scope>INTERACTION WITH FAS; GSK3B; TNFRSF10A AND TNFRSF10B</scope>
    <scope>CLEAVAGE BY CASPASES</scope>
</reference>
<reference key="12">
    <citation type="journal article" date="2008" name="Proc. Natl. Acad. Sci. U.S.A.">
        <title>A quantitative atlas of mitotic phosphorylation.</title>
        <authorList>
            <person name="Dephoure N."/>
            <person name="Zhou C."/>
            <person name="Villen J."/>
            <person name="Beausoleil S.A."/>
            <person name="Bakalarski C.E."/>
            <person name="Elledge S.J."/>
            <person name="Gygi S.P."/>
        </authorList>
    </citation>
    <scope>IDENTIFICATION BY MASS SPECTROMETRY [LARGE SCALE ANALYSIS]</scope>
    <source>
        <tissue>Cervix carcinoma</tissue>
    </source>
</reference>
<reference key="13">
    <citation type="journal article" date="2009" name="Sci. Signal.">
        <title>Quantitative phosphoproteomic analysis of T cell receptor signaling reveals system-wide modulation of protein-protein interactions.</title>
        <authorList>
            <person name="Mayya V."/>
            <person name="Lundgren D.H."/>
            <person name="Hwang S.-I."/>
            <person name="Rezaul K."/>
            <person name="Wu L."/>
            <person name="Eng J.K."/>
            <person name="Rodionov V."/>
            <person name="Han D.K."/>
        </authorList>
    </citation>
    <scope>IDENTIFICATION BY MASS SPECTROMETRY [LARGE SCALE ANALYSIS]</scope>
    <source>
        <tissue>Leukemic T-cell</tissue>
    </source>
</reference>
<reference key="14">
    <citation type="journal article" date="2010" name="Curr. Opin. Cell Biol.">
        <title>To fight or die - inhibitor of apoptosis proteins at the crossroad of innate immunity and death.</title>
        <authorList>
            <person name="Lopez J."/>
            <person name="Meier P."/>
        </authorList>
    </citation>
    <scope>REVIEW ON FUNCTION</scope>
</reference>
<reference key="15">
    <citation type="journal article" date="2010" name="Mol. Cell">
        <title>Systematic in vivo RNAi analysis identifies IAPs as NEDD8-E3 ligases.</title>
        <authorList>
            <person name="Broemer M."/>
            <person name="Tenev T."/>
            <person name="Rigbolt K.T."/>
            <person name="Hempel S."/>
            <person name="Blagoev B."/>
            <person name="Silke J."/>
            <person name="Ditzel M."/>
            <person name="Meier P."/>
        </authorList>
    </citation>
    <scope>FUNCTION AS AN E3 UBIQUITIN-PROTEIN LIGASE OF THE NEDD8 CONJUGATION PATHWAY</scope>
    <scope>CATALYTIC ACTIVITY</scope>
</reference>
<reference key="16">
    <citation type="journal article" date="2010" name="Nat. Rev. Cancer">
        <title>IAPs: from caspase inhibitors to modulators of NF-kappaB, inflammation and cancer.</title>
        <authorList>
            <person name="Gyrd-Hansen M."/>
            <person name="Meier P."/>
        </authorList>
    </citation>
    <scope>REVIEW ON FUNCTION</scope>
</reference>
<reference key="17">
    <citation type="journal article" date="2011" name="Discov. Med.">
        <title>Inhibitor of apoptosis (IAP) proteins in regulation of inflammation and innate immunity.</title>
        <authorList>
            <person name="Damgaard R.B."/>
            <person name="Gyrd-Hansen M."/>
        </authorList>
    </citation>
    <scope>REVIEW ON FUNCTION</scope>
</reference>
<reference key="18">
    <citation type="journal article" date="2011" name="J. Biol. Chem.">
        <title>Cellular inhibitor of apoptosis protein-1 (cIAP1) can regulate E2F1 transcription factor-mediated control of cyclin transcription.</title>
        <authorList>
            <person name="Cartier J."/>
            <person name="Berthelet J."/>
            <person name="Marivin A."/>
            <person name="Gemble S."/>
            <person name="Edmond V."/>
            <person name="Plenchette S."/>
            <person name="Lagrange B."/>
            <person name="Hammann A."/>
            <person name="Dupoux A."/>
            <person name="Delva L."/>
            <person name="Eymin B."/>
            <person name="Solary E."/>
            <person name="Dubrez L."/>
        </authorList>
    </citation>
    <scope>FUNCTION</scope>
    <scope>INTERACTION WITH E2F1 AND TRAF2</scope>
    <scope>SUBCELLULAR LOCATION</scope>
</reference>
<reference key="19">
    <citation type="journal article" date="2011" name="J. Biol. Chem.">
        <title>The USP19 deubiquitinase regulates the stability of c-IAP1 and c-IAP2.</title>
        <authorList>
            <person name="Mei Y."/>
            <person name="Hahn A.A."/>
            <person name="Hu S."/>
            <person name="Yang X."/>
        </authorList>
    </citation>
    <scope>ACTIVITY REGULATION</scope>
    <scope>INTERACTION WITH USP19</scope>
</reference>
<reference key="20">
    <citation type="journal article" date="2011" name="PLoS ONE">
        <title>cIAP1/2 are direct E3 ligases conjugating diverse types of ubiquitin chains to receptor interacting proteins kinases 1 to 4 (RIP1-4).</title>
        <authorList>
            <person name="Bertrand M.J."/>
            <person name="Lippens S."/>
            <person name="Staes A."/>
            <person name="Gilbert B."/>
            <person name="Roelandt R."/>
            <person name="De Medts J."/>
            <person name="Gevaert K."/>
            <person name="Declercq W."/>
            <person name="Vandenabeele P."/>
        </authorList>
    </citation>
    <scope>FUNCTION IN THE UBIQUITINATION OF RIPK1; RIPK2; RIPK3 AND RIPK4</scope>
    <scope>INTERACTION WITH RIPK1; RIPK2; RIPK3 AND RIPK4</scope>
    <scope>CATALYTIC ACTIVITY</scope>
</reference>
<reference key="21">
    <citation type="journal article" date="2012" name="Cell Death Differ.">
        <title>IAPs: guardians of RIPK1.</title>
        <authorList>
            <person name="Darding M."/>
            <person name="Meier P."/>
        </authorList>
    </citation>
    <scope>REVIEW ON FUNCTION</scope>
</reference>
<reference key="22">
    <citation type="journal article" date="2013" name="Cell Rep.">
        <title>IKKepsilon-mediated tumorigenesis requires K63-linked polyubiquitination by a cIAP1/cIAP2/TRAF2 E3 ubiquitin ligase complex.</title>
        <authorList>
            <person name="Zhou A.Y."/>
            <person name="Shen R.R."/>
            <person name="Kim E."/>
            <person name="Lock Y.J."/>
            <person name="Xu M."/>
            <person name="Chen Z.J."/>
            <person name="Hahn W.C."/>
        </authorList>
    </citation>
    <scope>FUNCTION IN IKBKE UBIQUITINATION</scope>
    <scope>CATALYTIC ACTIVITY</scope>
</reference>
<reference key="23">
    <citation type="journal article" date="2015" name="Biochim. Biophys. Acta">
        <title>Middle domain of human Hsp90 isoforms differentially binds Aha1 in human cells and alters Hsp90 activity in yeast.</title>
        <authorList>
            <person name="Synoradzki K."/>
            <person name="Bieganowski P."/>
        </authorList>
    </citation>
    <scope>INTERACTION WITH HSP90AB1</scope>
</reference>
<reference key="24">
    <citation type="journal article" date="2015" name="J. Biol. Chem.">
        <title>Ubiquitin-associated domain-containing ubiquitin regulatory X (UBX) protein UBXN1 is a negative regulator of nuclear factor kappaB (NF-kappaB) signaling.</title>
        <authorList>
            <person name="Wang Y.B."/>
            <person name="Tan B."/>
            <person name="Mu R."/>
            <person name="Chang Y."/>
            <person name="Wu M."/>
            <person name="Tu H.Q."/>
            <person name="Zhang Y.C."/>
            <person name="Guo S.S."/>
            <person name="Qin X.H."/>
            <person name="Li T."/>
            <person name="Li W.H."/>
            <person name="Li A.L."/>
            <person name="Zhang X.M."/>
            <person name="Li H.Y."/>
        </authorList>
    </citation>
    <scope>INTERACTION WITH UBXN1</scope>
</reference>
<reference key="25">
    <citation type="journal article" date="1999" name="Nat. Struct. Biol.">
        <title>Solution structure of a baculoviral inhibitor of apoptosis (IAP) repeat.</title>
        <authorList>
            <person name="Hinds M.G."/>
            <person name="Norton R.S."/>
            <person name="Vaux D.L."/>
            <person name="Day C.L."/>
        </authorList>
    </citation>
    <scope>STRUCTURE BY NMR OF 266-363</scope>
</reference>
<reference key="26">
    <citation type="journal article" date="2009" name="Acta Crystallogr. D">
        <title>The structure of the BIR3 domain of cIAP1 in complex with the N-terminal peptides of SMAC and caspase-9.</title>
        <authorList>
            <person name="Kulathila R."/>
            <person name="Vash B."/>
            <person name="Sage D."/>
            <person name="Cornell-Kennon S."/>
            <person name="Wright K."/>
            <person name="Koehn J."/>
            <person name="Stams T."/>
            <person name="Clark K."/>
            <person name="Price A."/>
        </authorList>
    </citation>
    <scope>X-RAY CRYSTALLOGRAPHY (1.5 ANGSTROMS) OF 260-352 IN COMPLEXES WITH ZINC IONS; DIABLO AND CASP9 PEPTIDES</scope>
    <scope>SUBUNIT</scope>
</reference>
<reference key="27">
    <citation type="journal article" date="2011" name="Mol. Cell">
        <title>CARD-mediated autoinhibition of cIAP1's E3 ligase activity suppresses cell proliferation and migration.</title>
        <authorList>
            <person name="Lopez J."/>
            <person name="John S.W."/>
            <person name="Tenev T."/>
            <person name="Rautureau G.J."/>
            <person name="Hinds M.G."/>
            <person name="Francalanci F."/>
            <person name="Wilson R."/>
            <person name="Broemer M."/>
            <person name="Santoro M.M."/>
            <person name="Day C.L."/>
            <person name="Meier P."/>
        </authorList>
    </citation>
    <scope>STRUCTURE BY NMR OF 435-562</scope>
    <scope>DOMAIN CARD</scope>
    <scope>ACTIVITY REGULATION</scope>
</reference>
<comment type="function">
    <text evidence="3 4 7 9 11 12">Multi-functional protein which regulates not only caspases and apoptosis, but also modulates inflammatory signaling and immunity, mitogenic kinase signaling, and cell proliferation, as well as cell invasion and metastasis. Acts as an E3 ubiquitin-protein ligase regulating NF-kappa-B signaling and regulates both canonical and non-canonical NF-kappa-B signaling by acting in opposite directions: acts as a positive regulator of the canonical pathway and suppresses constitutive activation of non-canonical NF-kappa-B signaling. The target proteins for its E3 ubiquitin-protein ligase activity include: RIPK1, RIPK2, RIPK3, RIPK4, CASP3, CASP7, CASP8, TRAF2, DIABLO/SMAC, MAP3K14/NIK, MAP3K5/ASK1, IKBKG/NEMO, IKBKE and MXD1/MAD1. Can also function as an E3 ubiquitin-protein ligase of the NEDD8 conjugation pathway, targeting effector caspases for neddylation and inactivation. Acts as an important regulator of innate immune signaling via regulation of Toll-like receptors (TLRs), Nodlike receptors (NLRs) and RIG-I like receptors (RLRs), collectively referred to as pattern recognition receptors (PRRs). Protects cells from spontaneous formation of the ripoptosome, a large multi-protein complex that has the capability to kill cancer cells in a caspase-dependent and caspase-independent manner. Suppresses ripoptosome formation by ubiquitinating RIPK1 and CASP8. Can stimulate the transcriptional activity of E2F1. Plays a role in the modulation of the cell cycle.</text>
</comment>
<comment type="catalytic activity">
    <reaction evidence="4 7 11 12">
        <text>S-ubiquitinyl-[E2 ubiquitin-conjugating enzyme]-L-cysteine + [acceptor protein]-L-lysine = [E2 ubiquitin-conjugating enzyme]-L-cysteine + N(6)-ubiquitinyl-[acceptor protein]-L-lysine.</text>
        <dbReference type="EC" id="2.3.2.27"/>
    </reaction>
</comment>
<comment type="activity regulation">
    <text evidence="8 10">The CARD domain inhibits the activation of E3 ubiquitin ligase activity by preventing RING domain dimerization and E2 ubiquitin donor binding and activation. The CARD domain-mediated autoinhibition of the E3 ubiquitin-protein ligase activity suppresses cell proliferation and migration. USP19 regulates the stability of BIRC2/c-IAP1 by preventing its ubiquitination.</text>
</comment>
<comment type="subunit">
    <text evidence="3 5 6 9 10 11 13 14">Interacts with DIABLO/SMAC and with PRSS25; these interactions inhibit apoptotic suppressor activity. Interacts with CASP9. Interacts (via BIR domains) with TRAF2; the interaction is required for IKBKE ubiquitination. Interacts with E2F1, RIPK1, RIPK2, RIPK3, RIPK4, BIRC5/survivin and USP19. HSP90AB1 (PubMed:25486457). Interacts with UBXN1 (PubMed:25681446). Interacts with GSK3B (PubMed:18846110). Interacts with several death receptors, inclusing FAS, TNFRSF10A and TNFRSF10B (PubMed:18846110). Recruited to TNFRSF10B in the absence of receptor stimulation. When TNFRSF10B is stimulated, further recruited to the receptor and cleaved by caspases. Proteolytic fragments remain associated with TNFRSF10B (PubMed:18846110).</text>
</comment>
<comment type="interaction">
    <interactant intactId="EBI-514538">
        <id>Q13490</id>
    </interactant>
    <interactant intactId="EBI-514538">
        <id>Q13490</id>
        <label>BIRC2</label>
    </interactant>
    <organismsDiffer>false</organismsDiffer>
    <experiments>4</experiments>
</comment>
<comment type="interaction">
    <interactant intactId="EBI-514538">
        <id>Q13490</id>
    </interactant>
    <interactant intactId="EBI-517623">
        <id>Q96CA5</id>
        <label>BIRC7</label>
    </interactant>
    <organismsDiffer>false</organismsDiffer>
    <experiments>8</experiments>
</comment>
<comment type="interaction">
    <interactant intactId="EBI-514538">
        <id>Q13490</id>
    </interactant>
    <interactant intactId="EBI-2105445">
        <id>P51451</id>
        <label>BLK</label>
    </interactant>
    <organismsDiffer>false</organismsDiffer>
    <experiments>3</experiments>
</comment>
<comment type="interaction">
    <interactant intactId="EBI-514538">
        <id>Q13490</id>
    </interactant>
    <interactant intactId="EBI-696657">
        <id>P51813</id>
        <label>BMX</label>
    </interactant>
    <organismsDiffer>false</organismsDiffer>
    <experiments>3</experiments>
</comment>
<comment type="interaction">
    <interactant intactId="EBI-514538">
        <id>Q13490</id>
    </interactant>
    <interactant intactId="EBI-1049556">
        <id>Q9Y3E2</id>
        <label>BOLA1</label>
    </interactant>
    <organismsDiffer>false</organismsDiffer>
    <experiments>7</experiments>
</comment>
<comment type="interaction">
    <interactant intactId="EBI-514538">
        <id>Q13490</id>
    </interactant>
    <interactant intactId="EBI-12006120">
        <id>A0A087WZT3</id>
        <label>BOLA2-SMG1P6</label>
    </interactant>
    <organismsDiffer>false</organismsDiffer>
    <experiments>3</experiments>
</comment>
<comment type="interaction">
    <interactant intactId="EBI-514538">
        <id>Q13490</id>
    </interactant>
    <interactant intactId="EBI-523958">
        <id>P55210</id>
        <label>CASP7</label>
    </interactant>
    <organismsDiffer>false</organismsDiffer>
    <experiments>3</experiments>
</comment>
<comment type="interaction">
    <interactant intactId="EBI-514538">
        <id>Q13490</id>
    </interactant>
    <interactant intactId="EBI-516799">
        <id>P55211</id>
        <label>CASP9</label>
    </interactant>
    <organismsDiffer>false</organismsDiffer>
    <experiments>12</experiments>
</comment>
<comment type="interaction">
    <interactant intactId="EBI-514538">
        <id>Q13490</id>
    </interactant>
    <interactant intactId="EBI-517508">
        <id>Q9NR28</id>
        <label>DIABLO</label>
    </interactant>
    <organismsDiffer>false</organismsDiffer>
    <experiments>7</experiments>
</comment>
<comment type="interaction">
    <interactant intactId="EBI-514538">
        <id>Q13490</id>
    </interactant>
    <interactant intactId="EBI-1245604">
        <id>Q96CJ1</id>
        <label>EAF2</label>
    </interactant>
    <organismsDiffer>false</organismsDiffer>
    <experiments>3</experiments>
</comment>
<comment type="interaction">
    <interactant intactId="EBI-514538">
        <id>Q13490</id>
    </interactant>
    <interactant intactId="EBI-371876">
        <id>Q9NQT4</id>
        <label>EXOSC5</label>
    </interactant>
    <organismsDiffer>false</organismsDiffer>
    <experiments>6</experiments>
</comment>
<comment type="interaction">
    <interactant intactId="EBI-514538">
        <id>Q13490</id>
    </interactant>
    <interactant intactId="EBI-746252">
        <id>Q96CN9</id>
        <label>GCC1</label>
    </interactant>
    <organismsDiffer>false</organismsDiffer>
    <experiments>6</experiments>
</comment>
<comment type="interaction">
    <interactant intactId="EBI-514538">
        <id>Q13490</id>
    </interactant>
    <interactant intactId="EBI-744302">
        <id>P14136</id>
        <label>GFAP</label>
    </interactant>
    <organismsDiffer>false</organismsDiffer>
    <experiments>3</experiments>
</comment>
<comment type="interaction">
    <interactant intactId="EBI-514538">
        <id>Q13490</id>
    </interactant>
    <interactant intactId="EBI-517086">
        <id>O43464</id>
        <label>HTRA2</label>
    </interactant>
    <organismsDiffer>false</organismsDiffer>
    <experiments>4</experiments>
</comment>
<comment type="interaction">
    <interactant intactId="EBI-514538">
        <id>Q13490</id>
    </interactant>
    <interactant intactId="EBI-1055254">
        <id>Q8WXH2</id>
        <label>JPH3</label>
    </interactant>
    <organismsDiffer>false</organismsDiffer>
    <experiments>3</experiments>
</comment>
<comment type="interaction">
    <interactant intactId="EBI-514538">
        <id>Q13490</id>
    </interactant>
    <interactant intactId="EBI-710124">
        <id>O60341</id>
        <label>KDM1A</label>
    </interactant>
    <organismsDiffer>false</organismsDiffer>
    <experiments>3</experiments>
</comment>
<comment type="interaction">
    <interactant intactId="EBI-514538">
        <id>Q13490</id>
    </interactant>
    <interactant intactId="EBI-739832">
        <id>Q8TBB1</id>
        <label>LNX1</label>
    </interactant>
    <organismsDiffer>false</organismsDiffer>
    <experiments>3</experiments>
</comment>
<comment type="interaction">
    <interactant intactId="EBI-514538">
        <id>Q13490</id>
    </interactant>
    <interactant intactId="EBI-7964376">
        <id>P08949</id>
        <label>NMB</label>
    </interactant>
    <organismsDiffer>false</organismsDiffer>
    <experiments>3</experiments>
</comment>
<comment type="interaction">
    <interactant intactId="EBI-514538">
        <id>Q13490</id>
    </interactant>
    <interactant intactId="EBI-12302085">
        <id>P08949-2</id>
        <label>NMB</label>
    </interactant>
    <organismsDiffer>false</organismsDiffer>
    <experiments>6</experiments>
</comment>
<comment type="interaction">
    <interactant intactId="EBI-514538">
        <id>Q13490</id>
    </interactant>
    <interactant intactId="EBI-741158">
        <id>Q96HA8</id>
        <label>NTAQ1</label>
    </interactant>
    <organismsDiffer>false</organismsDiffer>
    <experiments>8</experiments>
</comment>
<comment type="interaction">
    <interactant intactId="EBI-514538">
        <id>Q13490</id>
    </interactant>
    <interactant intactId="EBI-398874">
        <id>Q9UBU9</id>
        <label>NXF1</label>
    </interactant>
    <organismsDiffer>false</organismsDiffer>
    <experiments>3</experiments>
</comment>
<comment type="interaction">
    <interactant intactId="EBI-514538">
        <id>Q13490</id>
    </interactant>
    <interactant intactId="EBI-1058491">
        <id>Q96FW1</id>
        <label>OTUB1</label>
    </interactant>
    <organismsDiffer>false</organismsDiffer>
    <experiments>3</experiments>
</comment>
<comment type="interaction">
    <interactant intactId="EBI-514538">
        <id>Q13490</id>
    </interactant>
    <interactant intactId="EBI-3923368">
        <id>Q8N3J5</id>
        <label>PPM1K</label>
    </interactant>
    <organismsDiffer>false</organismsDiffer>
    <experiments>6</experiments>
</comment>
<comment type="interaction">
    <interactant intactId="EBI-514538">
        <id>Q13490</id>
    </interactant>
    <interactant intactId="EBI-413628">
        <id>P63000</id>
        <label>RAC1</label>
    </interactant>
    <organismsDiffer>false</organismsDiffer>
    <experiments>2</experiments>
</comment>
<comment type="interaction">
    <interactant intactId="EBI-514538">
        <id>Q13490</id>
    </interactant>
    <interactant intactId="EBI-712376">
        <id>P40937</id>
        <label>RFC5</label>
    </interactant>
    <organismsDiffer>false</organismsDiffer>
    <experiments>3</experiments>
</comment>
<comment type="interaction">
    <interactant intactId="EBI-514538">
        <id>Q13490</id>
    </interactant>
    <interactant intactId="EBI-358507">
        <id>Q13546</id>
        <label>RIPK1</label>
    </interactant>
    <organismsDiffer>false</organismsDiffer>
    <experiments>5</experiments>
</comment>
<comment type="interaction">
    <interactant intactId="EBI-514538">
        <id>Q13490</id>
    </interactant>
    <interactant intactId="EBI-358522">
        <id>O43353</id>
        <label>RIPK2</label>
    </interactant>
    <organismsDiffer>false</organismsDiffer>
    <experiments>3</experiments>
</comment>
<comment type="interaction">
    <interactant intactId="EBI-514538">
        <id>Q13490</id>
    </interactant>
    <interactant intactId="EBI-298250">
        <id>Q9Y572</id>
        <label>RIPK3</label>
    </interactant>
    <organismsDiffer>false</organismsDiffer>
    <experiments>3</experiments>
</comment>
<comment type="interaction">
    <interactant intactId="EBI-514538">
        <id>Q13490</id>
    </interactant>
    <interactant intactId="EBI-4422308">
        <id>P57078</id>
        <label>RIPK4</label>
    </interactant>
    <organismsDiffer>false</organismsDiffer>
    <experiments>3</experiments>
</comment>
<comment type="interaction">
    <interactant intactId="EBI-514538">
        <id>Q13490</id>
    </interactant>
    <interactant intactId="EBI-11984663">
        <id>Q06455-2</id>
        <label>RUNX1T1</label>
    </interactant>
    <organismsDiffer>false</organismsDiffer>
    <experiments>3</experiments>
</comment>
<comment type="interaction">
    <interactant intactId="EBI-514538">
        <id>Q13490</id>
    </interactant>
    <interactant intactId="EBI-11974855">
        <id>Q9Y4C2-2</id>
        <label>TCAF1</label>
    </interactant>
    <organismsDiffer>false</organismsDiffer>
    <experiments>3</experiments>
</comment>
<comment type="interaction">
    <interactant intactId="EBI-514538">
        <id>Q13490</id>
    </interactant>
    <interactant intactId="EBI-2851995">
        <id>Q9NP84</id>
        <label>TNFRSF12A</label>
    </interactant>
    <organismsDiffer>false</organismsDiffer>
    <experiments>2</experiments>
</comment>
<comment type="interaction">
    <interactant intactId="EBI-514538">
        <id>Q13490</id>
    </interactant>
    <interactant intactId="EBI-359224">
        <id>Q13077</id>
        <label>TRAF1</label>
    </interactant>
    <organismsDiffer>false</organismsDiffer>
    <experiments>8</experiments>
</comment>
<comment type="interaction">
    <interactant intactId="EBI-514538">
        <id>Q13490</id>
    </interactant>
    <interactant intactId="EBI-355744">
        <id>Q12933</id>
        <label>TRAF2</label>
    </interactant>
    <organismsDiffer>false</organismsDiffer>
    <experiments>19</experiments>
</comment>
<comment type="interaction">
    <interactant intactId="EBI-514538">
        <id>Q13490</id>
    </interactant>
    <interactant intactId="EBI-744794">
        <id>Q9BZW7</id>
        <label>TSGA10</label>
    </interactant>
    <organismsDiffer>false</organismsDiffer>
    <experiments>4</experiments>
</comment>
<comment type="interaction">
    <interactant intactId="EBI-16127374">
        <id>Q13490-1</id>
    </interactant>
    <interactant intactId="EBI-16127374">
        <id>Q13490-1</id>
        <label>BIRC2</label>
    </interactant>
    <organismsDiffer>false</organismsDiffer>
    <experiments>4</experiments>
</comment>
<comment type="subcellular location">
    <subcellularLocation>
        <location>Cytoplasm</location>
    </subcellularLocation>
    <subcellularLocation>
        <location>Nucleus</location>
    </subcellularLocation>
    <text>Agents that induce either the extrinsic or intrinsic apoptotic pathways promote its redistribution from the nuclear compartment to the cytoplasmic compartment. Associated with the midbody in telophase cells, and found diffusely in the nucleus of interphase cells.</text>
</comment>
<comment type="alternative products">
    <event type="alternative splicing"/>
    <isoform>
        <id>Q13490-1</id>
        <name>1</name>
        <sequence type="displayed"/>
    </isoform>
    <isoform>
        <id>Q13490-2</id>
        <name>2</name>
        <sequence type="described" ref="VSP_045314"/>
    </isoform>
</comment>
<comment type="tissue specificity">
    <text>Present in many fetal and adult tissues. Mainly expressed in adult skeletal muscle, thymus, testis, ovary, and pancreas, low or absent in brain and peripheral blood leukocytes.</text>
</comment>
<comment type="domain">
    <text evidence="8">The BIR domains mediate nuclear localization.</text>
</comment>
<comment type="domain">
    <text evidence="8">The CARD domain is necessary to stabilize the protein and inhibit the activation of E3 ubiquitin-protein ligase activity of BIRC2/c-IAP1 by preventing RING domain dimerization and E2 ubiquitin donor binding and activation.</text>
</comment>
<comment type="PTM">
    <text>Auto-ubiquitinated and degraded by the proteasome in apoptotic cells.</text>
</comment>
<comment type="PTM">
    <text evidence="5">Upon stimulation of death receptors, including TNFRSF10B, recruited to receptors and cleaved by caspases. Proteolytic fragments remain associated with the receptors. This cleavage presumably inactivates the protein.</text>
</comment>
<comment type="similarity">
    <text evidence="18">Belongs to the IAP family.</text>
</comment>
<comment type="online information" name="Atlas of Genetics and Cytogenetics in Oncology and Haematology">
    <link uri="https://atlasgeneticsoncology.org/gene/795/BIRC2"/>
</comment>
<sequence>MHKTASQRLFPGPSYQNIKSIMEDSTILSDWTNSNKQKMKYDFSCELYRMSTYSTFPAGVPVSERSLARAGFYYTGVNDKVKCFCCGLMLDNWKLGDSPIQKHKQLYPSCSFIQNLVSASLGSTSKNTSPMRNSFAHSLSPTLEHSSLFSGSYSSLSPNPLNSRAVEDISSSRTNPYSYAMSTEEARFLTYHMWPLTFLSPSELARAGFYYIGPGDRVACFACGGKLSNWEPKDDAMSEHRRHFPNCPFLENSLETLRFSISNLSMQTHAARMRTFMYWPSSVPVQPEQLASAGFYYVGRNDDVKCFCCDGGLRCWESGDDPWVEHAKWFPRCEFLIRMKGQEFVDEIQGRYPHLLEQLLSTSDTTGEENADPPIIHFGPGESSSEDAVMMNTPVVKSALEMGFNRDLVKQTVQSKILTTGENYKTVNDIVSALLNAEDEKREEEKEKQAEEMASDDLSLIRKNRMALFQQLTCVLPILDNLLKANVINKQEHDIIKQKTQIPLQARELIDTILVKGNAAANIFKNCLKEIDSTLYKNLFVDKNMKYIPTEDVSGLSLEEQLRRLQEERTCKVCMDKEVSVVFIPCGHLVVCQECAPSLRKCPICRGIIKGTVRTFLS</sequence>
<evidence type="ECO:0000255" key="1">
    <source>
        <dbReference type="PROSITE-ProRule" id="PRU00046"/>
    </source>
</evidence>
<evidence type="ECO:0000255" key="2">
    <source>
        <dbReference type="PROSITE-ProRule" id="PRU00175"/>
    </source>
</evidence>
<evidence type="ECO:0000269" key="3">
    <source>
    </source>
</evidence>
<evidence type="ECO:0000269" key="4">
    <source>
    </source>
</evidence>
<evidence type="ECO:0000269" key="5">
    <source>
    </source>
</evidence>
<evidence type="ECO:0000269" key="6">
    <source>
    </source>
</evidence>
<evidence type="ECO:0000269" key="7">
    <source>
    </source>
</evidence>
<evidence type="ECO:0000269" key="8">
    <source>
    </source>
</evidence>
<evidence type="ECO:0000269" key="9">
    <source>
    </source>
</evidence>
<evidence type="ECO:0000269" key="10">
    <source>
    </source>
</evidence>
<evidence type="ECO:0000269" key="11">
    <source>
    </source>
</evidence>
<evidence type="ECO:0000269" key="12">
    <source>
    </source>
</evidence>
<evidence type="ECO:0000269" key="13">
    <source>
    </source>
</evidence>
<evidence type="ECO:0000269" key="14">
    <source>
    </source>
</evidence>
<evidence type="ECO:0000269" key="15">
    <source ref="4"/>
</evidence>
<evidence type="ECO:0000303" key="16">
    <source>
    </source>
</evidence>
<evidence type="ECO:0000303" key="17">
    <source>
    </source>
</evidence>
<evidence type="ECO:0000305" key="18"/>
<evidence type="ECO:0007829" key="19">
    <source>
        <dbReference type="PDB" id="1QBH"/>
    </source>
</evidence>
<evidence type="ECO:0007829" key="20">
    <source>
        <dbReference type="PDB" id="2L9M"/>
    </source>
</evidence>
<evidence type="ECO:0007829" key="21">
    <source>
        <dbReference type="PDB" id="3D9T"/>
    </source>
</evidence>
<evidence type="ECO:0007829" key="22">
    <source>
        <dbReference type="PDB" id="3M1D"/>
    </source>
</evidence>
<evidence type="ECO:0007829" key="23">
    <source>
        <dbReference type="PDB" id="3T6P"/>
    </source>
</evidence>
<evidence type="ECO:0007829" key="24">
    <source>
        <dbReference type="PDB" id="4HY4"/>
    </source>
</evidence>
<evidence type="ECO:0007829" key="25">
    <source>
        <dbReference type="PDB" id="5M6N"/>
    </source>
</evidence>
<evidence type="ECO:0007829" key="26">
    <source>
        <dbReference type="PDB" id="6HPR"/>
    </source>
</evidence>
<evidence type="ECO:0007829" key="27">
    <source>
        <dbReference type="PDB" id="7QGJ"/>
    </source>
</evidence>
<accession>Q13490</accession>
<accession>B4E026</accession>
<accession>Q16516</accession>
<accession>Q4TTG0</accession>